<sequence>MEMSNAQRLILSNQYNLMSQLDPNNAAKYKRLQTIVERGYELQMRELNKDFGCLSEAECREIIDIMEMYHAMQESNNMLDAEERSKVDQRRLQFLGFDIATEAQQVHYVRFLVDSEGLYPQFDKADHHFNSQMPMLDKYRRMLQTWRNCPRQYHLCENELAQIFSA</sequence>
<dbReference type="EMBL" id="BA000031">
    <property type="protein sequence ID" value="BAC59253.1"/>
    <property type="molecule type" value="Genomic_DNA"/>
</dbReference>
<dbReference type="RefSeq" id="NP_797369.1">
    <property type="nucleotide sequence ID" value="NC_004603.1"/>
</dbReference>
<dbReference type="RefSeq" id="WP_005456271.1">
    <property type="nucleotide sequence ID" value="NC_004603.1"/>
</dbReference>
<dbReference type="SMR" id="Q87R08"/>
<dbReference type="GeneID" id="1188494"/>
<dbReference type="KEGG" id="vpa:VP0990"/>
<dbReference type="PATRIC" id="fig|223926.6.peg.938"/>
<dbReference type="eggNOG" id="COG3013">
    <property type="taxonomic scope" value="Bacteria"/>
</dbReference>
<dbReference type="HOGENOM" id="CLU_101021_1_0_6"/>
<dbReference type="Proteomes" id="UP000002493">
    <property type="component" value="Chromosome 1"/>
</dbReference>
<dbReference type="Gene3D" id="1.10.287.680">
    <property type="entry name" value="Helix hairpin bin"/>
    <property type="match status" value="1"/>
</dbReference>
<dbReference type="Gene3D" id="1.10.3190.10">
    <property type="entry name" value="yfbu gene product, domain 2"/>
    <property type="match status" value="1"/>
</dbReference>
<dbReference type="HAMAP" id="MF_00762">
    <property type="entry name" value="UPF0304"/>
    <property type="match status" value="1"/>
</dbReference>
<dbReference type="InterPro" id="IPR005587">
    <property type="entry name" value="UPF0304_YfbU"/>
</dbReference>
<dbReference type="InterPro" id="IPR023146">
    <property type="entry name" value="YfbU_alpha-helical_sf"/>
</dbReference>
<dbReference type="InterPro" id="IPR023145">
    <property type="entry name" value="YfbU_helix-hairpin_sf"/>
</dbReference>
<dbReference type="NCBIfam" id="NF003936">
    <property type="entry name" value="PRK05445.1"/>
    <property type="match status" value="1"/>
</dbReference>
<dbReference type="Pfam" id="PF03887">
    <property type="entry name" value="YfbU"/>
    <property type="match status" value="1"/>
</dbReference>
<dbReference type="PIRSF" id="PIRSF006272">
    <property type="entry name" value="UCP006272"/>
    <property type="match status" value="1"/>
</dbReference>
<dbReference type="SUPFAM" id="SSF116960">
    <property type="entry name" value="YfbU-like"/>
    <property type="match status" value="1"/>
</dbReference>
<organism>
    <name type="scientific">Vibrio parahaemolyticus serotype O3:K6 (strain RIMD 2210633)</name>
    <dbReference type="NCBI Taxonomy" id="223926"/>
    <lineage>
        <taxon>Bacteria</taxon>
        <taxon>Pseudomonadati</taxon>
        <taxon>Pseudomonadota</taxon>
        <taxon>Gammaproteobacteria</taxon>
        <taxon>Vibrionales</taxon>
        <taxon>Vibrionaceae</taxon>
        <taxon>Vibrio</taxon>
    </lineage>
</organism>
<evidence type="ECO:0000255" key="1">
    <source>
        <dbReference type="HAMAP-Rule" id="MF_00762"/>
    </source>
</evidence>
<proteinExistence type="inferred from homology"/>
<gene>
    <name type="ordered locus">VP0990</name>
</gene>
<comment type="similarity">
    <text evidence="1">Belongs to the UPF0304 family.</text>
</comment>
<feature type="chain" id="PRO_0000218171" description="UPF0304 protein VP0990">
    <location>
        <begin position="1"/>
        <end position="166"/>
    </location>
</feature>
<name>Y990_VIBPA</name>
<reference key="1">
    <citation type="journal article" date="2003" name="Lancet">
        <title>Genome sequence of Vibrio parahaemolyticus: a pathogenic mechanism distinct from that of V. cholerae.</title>
        <authorList>
            <person name="Makino K."/>
            <person name="Oshima K."/>
            <person name="Kurokawa K."/>
            <person name="Yokoyama K."/>
            <person name="Uda T."/>
            <person name="Tagomori K."/>
            <person name="Iijima Y."/>
            <person name="Najima M."/>
            <person name="Nakano M."/>
            <person name="Yamashita A."/>
            <person name="Kubota Y."/>
            <person name="Kimura S."/>
            <person name="Yasunaga T."/>
            <person name="Honda T."/>
            <person name="Shinagawa H."/>
            <person name="Hattori M."/>
            <person name="Iida T."/>
        </authorList>
    </citation>
    <scope>NUCLEOTIDE SEQUENCE [LARGE SCALE GENOMIC DNA]</scope>
    <source>
        <strain>RIMD 2210633</strain>
    </source>
</reference>
<accession>Q87R08</accession>
<protein>
    <recommendedName>
        <fullName evidence="1">UPF0304 protein VP0990</fullName>
    </recommendedName>
</protein>